<feature type="chain" id="PRO_0000341317" description="Anaerobic nitric oxide reductase transcription regulator NorR">
    <location>
        <begin position="1"/>
        <end position="506"/>
    </location>
</feature>
<feature type="domain" description="Sigma-54 factor interaction" evidence="1">
    <location>
        <begin position="187"/>
        <end position="416"/>
    </location>
</feature>
<feature type="DNA-binding region" description="H-T-H motif" evidence="1">
    <location>
        <begin position="481"/>
        <end position="500"/>
    </location>
</feature>
<feature type="binding site" evidence="1">
    <location>
        <begin position="215"/>
        <end position="222"/>
    </location>
    <ligand>
        <name>ATP</name>
        <dbReference type="ChEBI" id="CHEBI:30616"/>
    </ligand>
</feature>
<feature type="binding site" evidence="1">
    <location>
        <begin position="278"/>
        <end position="287"/>
    </location>
    <ligand>
        <name>ATP</name>
        <dbReference type="ChEBI" id="CHEBI:30616"/>
    </ligand>
</feature>
<feature type="modified residue" description="4-aspartylphosphate" evidence="1">
    <location>
        <position position="57"/>
    </location>
</feature>
<protein>
    <recommendedName>
        <fullName evidence="1">Anaerobic nitric oxide reductase transcription regulator NorR</fullName>
    </recommendedName>
</protein>
<evidence type="ECO:0000255" key="1">
    <source>
        <dbReference type="HAMAP-Rule" id="MF_01314"/>
    </source>
</evidence>
<sequence>MSFSVDVLAGIAIELQSGIGHQDRFQRLITTLRQVLECDASALLRYEGRQFIPLAIDGLAQDVLGRRFTLEGHPRLEAIARAGDVVRFPADSDLPDPYDGLIPDQESLKVHACIGLPLFAGQTLIGALTLDGMEPDQFDVFSDEELRLIAALAAGALSNALLIEQLESQNMLPGSSASFEQVKETQMIGLSPNMMQLKKEIEIVAGSDLNVLISGETGTGKELVAKAIHEGSPRAVNPLVYLNCAALPESVAESELFGHVKGAFTGAISNRSGKFEMADNGTLFLDEIGELSLALQAKLLRVLQYGDIQRVGDDRSLRVDVRVLAATNRDLREEVLAGRFRADLFHRLSVFPLSVPPLRERGEDVVLLAGYFCEQCRLRLGLSRVVLSPGARSHLLSYGWPGNVRELEHAIHRAVVLARATRAGDEVVLEAQHFALQEEVSPALPDDSTPTLPANHNLRDATEAFQREMIRRALAQNNHNWAACARALETDVANLHRLAKRLGLKS</sequence>
<comment type="function">
    <text evidence="1">Required for the expression of anaerobic nitric oxide (NO) reductase, acts as a transcriptional activator for at least the norVW operon. Activation also requires sigma-54.</text>
</comment>
<comment type="pathway">
    <text evidence="1">Nitrogen metabolism; nitric oxide reduction.</text>
</comment>
<proteinExistence type="inferred from homology"/>
<reference key="1">
    <citation type="submission" date="2007-08" db="EMBL/GenBank/DDBJ databases">
        <authorList>
            <consortium name="The Citrobacter koseri Genome Sequencing Project"/>
            <person name="McClelland M."/>
            <person name="Sanderson E.K."/>
            <person name="Porwollik S."/>
            <person name="Spieth J."/>
            <person name="Clifton W.S."/>
            <person name="Latreille P."/>
            <person name="Courtney L."/>
            <person name="Wang C."/>
            <person name="Pepin K."/>
            <person name="Bhonagiri V."/>
            <person name="Nash W."/>
            <person name="Johnson M."/>
            <person name="Thiruvilangam P."/>
            <person name="Wilson R."/>
        </authorList>
    </citation>
    <scope>NUCLEOTIDE SEQUENCE [LARGE SCALE GENOMIC DNA]</scope>
    <source>
        <strain>ATCC BAA-895 / CDC 4225-83 / SGSC4696</strain>
    </source>
</reference>
<organism>
    <name type="scientific">Citrobacter koseri (strain ATCC BAA-895 / CDC 4225-83 / SGSC4696)</name>
    <dbReference type="NCBI Taxonomy" id="290338"/>
    <lineage>
        <taxon>Bacteria</taxon>
        <taxon>Pseudomonadati</taxon>
        <taxon>Pseudomonadota</taxon>
        <taxon>Gammaproteobacteria</taxon>
        <taxon>Enterobacterales</taxon>
        <taxon>Enterobacteriaceae</taxon>
        <taxon>Citrobacter</taxon>
    </lineage>
</organism>
<dbReference type="EMBL" id="CP000822">
    <property type="protein sequence ID" value="ABV15129.1"/>
    <property type="molecule type" value="Genomic_DNA"/>
</dbReference>
<dbReference type="RefSeq" id="WP_012134819.1">
    <property type="nucleotide sequence ID" value="NC_009792.1"/>
</dbReference>
<dbReference type="SMR" id="A8ANR6"/>
<dbReference type="STRING" id="290338.CKO_04063"/>
<dbReference type="GeneID" id="45137705"/>
<dbReference type="KEGG" id="cko:CKO_04063"/>
<dbReference type="HOGENOM" id="CLU_000445_125_0_6"/>
<dbReference type="OrthoDB" id="9804019at2"/>
<dbReference type="UniPathway" id="UPA00638"/>
<dbReference type="Proteomes" id="UP000008148">
    <property type="component" value="Chromosome"/>
</dbReference>
<dbReference type="GO" id="GO:0005524">
    <property type="term" value="F:ATP binding"/>
    <property type="evidence" value="ECO:0007669"/>
    <property type="project" value="UniProtKB-UniRule"/>
</dbReference>
<dbReference type="GO" id="GO:0016887">
    <property type="term" value="F:ATP hydrolysis activity"/>
    <property type="evidence" value="ECO:0007669"/>
    <property type="project" value="InterPro"/>
</dbReference>
<dbReference type="GO" id="GO:0003677">
    <property type="term" value="F:DNA binding"/>
    <property type="evidence" value="ECO:0007669"/>
    <property type="project" value="UniProtKB-KW"/>
</dbReference>
<dbReference type="GO" id="GO:0003700">
    <property type="term" value="F:DNA-binding transcription factor activity"/>
    <property type="evidence" value="ECO:0007669"/>
    <property type="project" value="UniProtKB-UniRule"/>
</dbReference>
<dbReference type="GO" id="GO:0000160">
    <property type="term" value="P:phosphorelay signal transduction system"/>
    <property type="evidence" value="ECO:0007669"/>
    <property type="project" value="UniProtKB-UniRule"/>
</dbReference>
<dbReference type="CDD" id="cd00009">
    <property type="entry name" value="AAA"/>
    <property type="match status" value="1"/>
</dbReference>
<dbReference type="FunFam" id="1.10.8.60:FF:000045">
    <property type="entry name" value="Anaerobic nitric oxide reductase transcription regulator NorR"/>
    <property type="match status" value="1"/>
</dbReference>
<dbReference type="FunFam" id="3.30.450.40:FF:000021">
    <property type="entry name" value="Anaerobic nitric oxide reductase transcription regulator NorR"/>
    <property type="match status" value="1"/>
</dbReference>
<dbReference type="FunFam" id="3.40.50.300:FF:000006">
    <property type="entry name" value="DNA-binding transcriptional regulator NtrC"/>
    <property type="match status" value="1"/>
</dbReference>
<dbReference type="Gene3D" id="1.10.8.60">
    <property type="match status" value="1"/>
</dbReference>
<dbReference type="Gene3D" id="3.30.450.40">
    <property type="match status" value="1"/>
</dbReference>
<dbReference type="Gene3D" id="1.10.10.60">
    <property type="entry name" value="Homeodomain-like"/>
    <property type="match status" value="1"/>
</dbReference>
<dbReference type="Gene3D" id="3.40.50.300">
    <property type="entry name" value="P-loop containing nucleotide triphosphate hydrolases"/>
    <property type="match status" value="1"/>
</dbReference>
<dbReference type="HAMAP" id="MF_01314">
    <property type="entry name" value="NorR"/>
    <property type="match status" value="1"/>
</dbReference>
<dbReference type="InterPro" id="IPR003593">
    <property type="entry name" value="AAA+_ATPase"/>
</dbReference>
<dbReference type="InterPro" id="IPR003018">
    <property type="entry name" value="GAF"/>
</dbReference>
<dbReference type="InterPro" id="IPR029016">
    <property type="entry name" value="GAF-like_dom_sf"/>
</dbReference>
<dbReference type="InterPro" id="IPR009057">
    <property type="entry name" value="Homeodomain-like_sf"/>
</dbReference>
<dbReference type="InterPro" id="IPR023944">
    <property type="entry name" value="NorR"/>
</dbReference>
<dbReference type="InterPro" id="IPR027417">
    <property type="entry name" value="P-loop_NTPase"/>
</dbReference>
<dbReference type="InterPro" id="IPR002078">
    <property type="entry name" value="Sigma_54_int"/>
</dbReference>
<dbReference type="InterPro" id="IPR025662">
    <property type="entry name" value="Sigma_54_int_dom_ATP-bd_1"/>
</dbReference>
<dbReference type="InterPro" id="IPR025943">
    <property type="entry name" value="Sigma_54_int_dom_ATP-bd_2"/>
</dbReference>
<dbReference type="InterPro" id="IPR025944">
    <property type="entry name" value="Sigma_54_int_dom_CS"/>
</dbReference>
<dbReference type="NCBIfam" id="NF003451">
    <property type="entry name" value="PRK05022.1"/>
    <property type="match status" value="1"/>
</dbReference>
<dbReference type="PANTHER" id="PTHR32071:SF35">
    <property type="entry name" value="ANAEROBIC NITRIC OXIDE REDUCTASE TRANSCRIPTION REGULATOR NORR"/>
    <property type="match status" value="1"/>
</dbReference>
<dbReference type="PANTHER" id="PTHR32071">
    <property type="entry name" value="TRANSCRIPTIONAL REGULATORY PROTEIN"/>
    <property type="match status" value="1"/>
</dbReference>
<dbReference type="Pfam" id="PF01590">
    <property type="entry name" value="GAF"/>
    <property type="match status" value="1"/>
</dbReference>
<dbReference type="Pfam" id="PF00158">
    <property type="entry name" value="Sigma54_activat"/>
    <property type="match status" value="1"/>
</dbReference>
<dbReference type="SMART" id="SM00382">
    <property type="entry name" value="AAA"/>
    <property type="match status" value="1"/>
</dbReference>
<dbReference type="SMART" id="SM00065">
    <property type="entry name" value="GAF"/>
    <property type="match status" value="1"/>
</dbReference>
<dbReference type="SUPFAM" id="SSF55781">
    <property type="entry name" value="GAF domain-like"/>
    <property type="match status" value="1"/>
</dbReference>
<dbReference type="SUPFAM" id="SSF46689">
    <property type="entry name" value="Homeodomain-like"/>
    <property type="match status" value="1"/>
</dbReference>
<dbReference type="SUPFAM" id="SSF52540">
    <property type="entry name" value="P-loop containing nucleoside triphosphate hydrolases"/>
    <property type="match status" value="1"/>
</dbReference>
<dbReference type="PROSITE" id="PS00675">
    <property type="entry name" value="SIGMA54_INTERACT_1"/>
    <property type="match status" value="1"/>
</dbReference>
<dbReference type="PROSITE" id="PS00676">
    <property type="entry name" value="SIGMA54_INTERACT_2"/>
    <property type="match status" value="1"/>
</dbReference>
<dbReference type="PROSITE" id="PS00688">
    <property type="entry name" value="SIGMA54_INTERACT_3"/>
    <property type="match status" value="1"/>
</dbReference>
<dbReference type="PROSITE" id="PS50045">
    <property type="entry name" value="SIGMA54_INTERACT_4"/>
    <property type="match status" value="1"/>
</dbReference>
<accession>A8ANR6</accession>
<name>NORR_CITK8</name>
<gene>
    <name evidence="1" type="primary">norR</name>
    <name type="ordered locus">CKO_04063</name>
</gene>
<keyword id="KW-0067">ATP-binding</keyword>
<keyword id="KW-0238">DNA-binding</keyword>
<keyword id="KW-0547">Nucleotide-binding</keyword>
<keyword id="KW-0597">Phosphoprotein</keyword>
<keyword id="KW-1185">Reference proteome</keyword>
<keyword id="KW-0804">Transcription</keyword>
<keyword id="KW-0805">Transcription regulation</keyword>